<feature type="chain" id="PRO_1000205328" description="DNA repair and recombination protein RadA">
    <location>
        <begin position="1"/>
        <end position="324"/>
    </location>
</feature>
<feature type="binding site" evidence="1">
    <location>
        <begin position="114"/>
        <end position="121"/>
    </location>
    <ligand>
        <name>ATP</name>
        <dbReference type="ChEBI" id="CHEBI:30616"/>
    </ligand>
</feature>
<comment type="function">
    <text evidence="1">Involved in DNA repair and in homologous recombination. Binds and assemble on single-stranded DNA to form a nucleoprotein filament. Hydrolyzes ATP in a ssDNA-dependent manner and promotes DNA strand exchange between homologous DNA molecules.</text>
</comment>
<comment type="similarity">
    <text evidence="1">Belongs to the eukaryotic RecA-like protein family.</text>
</comment>
<proteinExistence type="inferred from homology"/>
<reference key="1">
    <citation type="journal article" date="2009" name="Proc. Natl. Acad. Sci. U.S.A.">
        <title>Biogeography of the Sulfolobus islandicus pan-genome.</title>
        <authorList>
            <person name="Reno M.L."/>
            <person name="Held N.L."/>
            <person name="Fields C.J."/>
            <person name="Burke P.V."/>
            <person name="Whitaker R.J."/>
        </authorList>
    </citation>
    <scope>NUCLEOTIDE SEQUENCE [LARGE SCALE GENOMIC DNA]</scope>
    <source>
        <strain>M.14.25 / Kamchatka #1</strain>
    </source>
</reference>
<organism>
    <name type="scientific">Saccharolobus islandicus (strain M.14.25 / Kamchatka #1)</name>
    <name type="common">Sulfolobus islandicus</name>
    <dbReference type="NCBI Taxonomy" id="427317"/>
    <lineage>
        <taxon>Archaea</taxon>
        <taxon>Thermoproteota</taxon>
        <taxon>Thermoprotei</taxon>
        <taxon>Sulfolobales</taxon>
        <taxon>Sulfolobaceae</taxon>
        <taxon>Saccharolobus</taxon>
    </lineage>
</organism>
<keyword id="KW-0067">ATP-binding</keyword>
<keyword id="KW-0227">DNA damage</keyword>
<keyword id="KW-0233">DNA recombination</keyword>
<keyword id="KW-0238">DNA-binding</keyword>
<keyword id="KW-0547">Nucleotide-binding</keyword>
<sequence>MSNEVEQKKSIKTINDLPGISQTVINKLIEAGYSSLETLAVASPQDLSVAAGIPLSTAQKIIKEARDALDIRFKTALEVKKERMNVKKISTGSQALDGLLAGGIETRTMTEFFGEFGSGKTQLCHQLSVNVQLPPEKGGLSGKAVYIDTEGTFRWERIENMAKALGLDIDNVMNNIYYIRAINTDHQIAIVDDLQELVSKDPSIKLIVVDSVTSHFRAEYPGRENLAVRQQKLNKHLHQLTRLAEVYDIAVIITNQVMARPDMFYGDPTVAVGGHTLYHVPGIRIQLKKSRGNRRIARVVDAPHLPEGEVVFALTEEGIRDAEE</sequence>
<dbReference type="EMBL" id="CP001400">
    <property type="protein sequence ID" value="ACP38634.1"/>
    <property type="molecule type" value="Genomic_DNA"/>
</dbReference>
<dbReference type="RefSeq" id="WP_012711863.1">
    <property type="nucleotide sequence ID" value="NC_012588.1"/>
</dbReference>
<dbReference type="SMR" id="C3MY77"/>
<dbReference type="GeneID" id="84062203"/>
<dbReference type="KEGG" id="sia:M1425_1890"/>
<dbReference type="HOGENOM" id="CLU_041732_0_0_2"/>
<dbReference type="Proteomes" id="UP000001350">
    <property type="component" value="Chromosome"/>
</dbReference>
<dbReference type="GO" id="GO:0005524">
    <property type="term" value="F:ATP binding"/>
    <property type="evidence" value="ECO:0007669"/>
    <property type="project" value="UniProtKB-UniRule"/>
</dbReference>
<dbReference type="GO" id="GO:0016887">
    <property type="term" value="F:ATP hydrolysis activity"/>
    <property type="evidence" value="ECO:0007669"/>
    <property type="project" value="InterPro"/>
</dbReference>
<dbReference type="GO" id="GO:0140664">
    <property type="term" value="F:ATP-dependent DNA damage sensor activity"/>
    <property type="evidence" value="ECO:0007669"/>
    <property type="project" value="InterPro"/>
</dbReference>
<dbReference type="GO" id="GO:0003684">
    <property type="term" value="F:damaged DNA binding"/>
    <property type="evidence" value="ECO:0007669"/>
    <property type="project" value="UniProtKB-UniRule"/>
</dbReference>
<dbReference type="GO" id="GO:0006310">
    <property type="term" value="P:DNA recombination"/>
    <property type="evidence" value="ECO:0007669"/>
    <property type="project" value="UniProtKB-UniRule"/>
</dbReference>
<dbReference type="GO" id="GO:0006281">
    <property type="term" value="P:DNA repair"/>
    <property type="evidence" value="ECO:0007669"/>
    <property type="project" value="UniProtKB-UniRule"/>
</dbReference>
<dbReference type="CDD" id="cd19515">
    <property type="entry name" value="archRadA"/>
    <property type="match status" value="1"/>
</dbReference>
<dbReference type="FunFam" id="3.40.50.300:FF:002052">
    <property type="entry name" value="DNA repair protein RAD51 homolog"/>
    <property type="match status" value="1"/>
</dbReference>
<dbReference type="Gene3D" id="1.10.150.20">
    <property type="entry name" value="5' to 3' exonuclease, C-terminal subdomain"/>
    <property type="match status" value="1"/>
</dbReference>
<dbReference type="Gene3D" id="3.40.50.300">
    <property type="entry name" value="P-loop containing nucleotide triphosphate hydrolases"/>
    <property type="match status" value="1"/>
</dbReference>
<dbReference type="HAMAP" id="MF_00348">
    <property type="entry name" value="RadA_arch"/>
    <property type="match status" value="1"/>
</dbReference>
<dbReference type="InterPro" id="IPR003593">
    <property type="entry name" value="AAA+_ATPase"/>
</dbReference>
<dbReference type="InterPro" id="IPR013632">
    <property type="entry name" value="DNA_recomb/repair_Rad51_C"/>
</dbReference>
<dbReference type="InterPro" id="IPR011938">
    <property type="entry name" value="DNA_recomb/repair_RadA"/>
</dbReference>
<dbReference type="InterPro" id="IPR016467">
    <property type="entry name" value="DNA_recomb/repair_RecA-like"/>
</dbReference>
<dbReference type="InterPro" id="IPR010995">
    <property type="entry name" value="DNA_repair_Rad51/TF_NusA_a-hlx"/>
</dbReference>
<dbReference type="InterPro" id="IPR027417">
    <property type="entry name" value="P-loop_NTPase"/>
</dbReference>
<dbReference type="InterPro" id="IPR020588">
    <property type="entry name" value="RecA_ATP-bd"/>
</dbReference>
<dbReference type="InterPro" id="IPR020587">
    <property type="entry name" value="RecA_monomer-monomer_interface"/>
</dbReference>
<dbReference type="NCBIfam" id="NF003301">
    <property type="entry name" value="PRK04301.1"/>
    <property type="match status" value="1"/>
</dbReference>
<dbReference type="NCBIfam" id="TIGR02236">
    <property type="entry name" value="recomb_radA"/>
    <property type="match status" value="1"/>
</dbReference>
<dbReference type="PANTHER" id="PTHR22942:SF30">
    <property type="entry name" value="MEIOTIC RECOMBINATION PROTEIN DMC1_LIM15 HOMOLOG"/>
    <property type="match status" value="1"/>
</dbReference>
<dbReference type="PANTHER" id="PTHR22942">
    <property type="entry name" value="RECA/RAD51/RADA DNA STRAND-PAIRING FAMILY MEMBER"/>
    <property type="match status" value="1"/>
</dbReference>
<dbReference type="Pfam" id="PF14520">
    <property type="entry name" value="HHH_5"/>
    <property type="match status" value="1"/>
</dbReference>
<dbReference type="Pfam" id="PF08423">
    <property type="entry name" value="Rad51"/>
    <property type="match status" value="1"/>
</dbReference>
<dbReference type="PIRSF" id="PIRSF005856">
    <property type="entry name" value="Rad51"/>
    <property type="match status" value="1"/>
</dbReference>
<dbReference type="SMART" id="SM00382">
    <property type="entry name" value="AAA"/>
    <property type="match status" value="1"/>
</dbReference>
<dbReference type="SUPFAM" id="SSF52540">
    <property type="entry name" value="P-loop containing nucleoside triphosphate hydrolases"/>
    <property type="match status" value="1"/>
</dbReference>
<dbReference type="SUPFAM" id="SSF47794">
    <property type="entry name" value="Rad51 N-terminal domain-like"/>
    <property type="match status" value="1"/>
</dbReference>
<dbReference type="PROSITE" id="PS50162">
    <property type="entry name" value="RECA_2"/>
    <property type="match status" value="1"/>
</dbReference>
<dbReference type="PROSITE" id="PS50163">
    <property type="entry name" value="RECA_3"/>
    <property type="match status" value="1"/>
</dbReference>
<protein>
    <recommendedName>
        <fullName evidence="1">DNA repair and recombination protein RadA</fullName>
    </recommendedName>
</protein>
<evidence type="ECO:0000255" key="1">
    <source>
        <dbReference type="HAMAP-Rule" id="MF_00348"/>
    </source>
</evidence>
<gene>
    <name evidence="1" type="primary">radA</name>
    <name type="ordered locus">M1425_1890</name>
</gene>
<accession>C3MY77</accession>
<name>RADA_SACI4</name>